<accession>A4QL71</accession>
<comment type="catalytic activity">
    <reaction evidence="2">
        <text>a plastoquinone + NADH + (n+1) H(+)(in) = a plastoquinol + NAD(+) + n H(+)(out)</text>
        <dbReference type="Rhea" id="RHEA:42608"/>
        <dbReference type="Rhea" id="RHEA-COMP:9561"/>
        <dbReference type="Rhea" id="RHEA-COMP:9562"/>
        <dbReference type="ChEBI" id="CHEBI:15378"/>
        <dbReference type="ChEBI" id="CHEBI:17757"/>
        <dbReference type="ChEBI" id="CHEBI:57540"/>
        <dbReference type="ChEBI" id="CHEBI:57945"/>
        <dbReference type="ChEBI" id="CHEBI:62192"/>
    </reaction>
</comment>
<comment type="catalytic activity">
    <reaction evidence="2">
        <text>a plastoquinone + NADPH + (n+1) H(+)(in) = a plastoquinol + NADP(+) + n H(+)(out)</text>
        <dbReference type="Rhea" id="RHEA:42612"/>
        <dbReference type="Rhea" id="RHEA-COMP:9561"/>
        <dbReference type="Rhea" id="RHEA-COMP:9562"/>
        <dbReference type="ChEBI" id="CHEBI:15378"/>
        <dbReference type="ChEBI" id="CHEBI:17757"/>
        <dbReference type="ChEBI" id="CHEBI:57783"/>
        <dbReference type="ChEBI" id="CHEBI:58349"/>
        <dbReference type="ChEBI" id="CHEBI:62192"/>
    </reaction>
</comment>
<comment type="subcellular location">
    <subcellularLocation>
        <location evidence="2">Plastid</location>
        <location evidence="2">Chloroplast thylakoid membrane</location>
        <topology evidence="2">Multi-pass membrane protein</topology>
    </subcellularLocation>
</comment>
<comment type="RNA editing">
    <location>
        <position position="1" evidence="1"/>
    </location>
    <text evidence="1">The initiator methionine is created by RNA editing.</text>
</comment>
<comment type="similarity">
    <text evidence="2">Belongs to the complex I subunit 4 family.</text>
</comment>
<keyword id="KW-0150">Chloroplast</keyword>
<keyword id="KW-0472">Membrane</keyword>
<keyword id="KW-0520">NAD</keyword>
<keyword id="KW-0521">NADP</keyword>
<keyword id="KW-0934">Plastid</keyword>
<keyword id="KW-0618">Plastoquinone</keyword>
<keyword id="KW-0874">Quinone</keyword>
<keyword id="KW-0691">RNA editing</keyword>
<keyword id="KW-0793">Thylakoid</keyword>
<keyword id="KW-1278">Translocase</keyword>
<keyword id="KW-0812">Transmembrane</keyword>
<keyword id="KW-1133">Transmembrane helix</keyword>
<feature type="chain" id="PRO_0000343284" description="NAD(P)H-quinone oxidoreductase chain 4, chloroplastic">
    <location>
        <begin position="1"/>
        <end position="500"/>
    </location>
</feature>
<feature type="transmembrane region" description="Helical" evidence="2">
    <location>
        <begin position="4"/>
        <end position="24"/>
    </location>
</feature>
<feature type="transmembrane region" description="Helical" evidence="2">
    <location>
        <begin position="35"/>
        <end position="55"/>
    </location>
</feature>
<feature type="transmembrane region" description="Helical" evidence="2">
    <location>
        <begin position="87"/>
        <end position="107"/>
    </location>
</feature>
<feature type="transmembrane region" description="Helical" evidence="2">
    <location>
        <begin position="113"/>
        <end position="130"/>
    </location>
</feature>
<feature type="transmembrane region" description="Helical" evidence="2">
    <location>
        <begin position="134"/>
        <end position="154"/>
    </location>
</feature>
<feature type="transmembrane region" description="Helical" evidence="2">
    <location>
        <begin position="167"/>
        <end position="187"/>
    </location>
</feature>
<feature type="transmembrane region" description="Helical" evidence="2">
    <location>
        <begin position="211"/>
        <end position="231"/>
    </location>
</feature>
<feature type="transmembrane region" description="Helical" evidence="2">
    <location>
        <begin position="242"/>
        <end position="262"/>
    </location>
</feature>
<feature type="transmembrane region" description="Helical" evidence="2">
    <location>
        <begin position="272"/>
        <end position="292"/>
    </location>
</feature>
<feature type="transmembrane region" description="Helical" evidence="2">
    <location>
        <begin position="305"/>
        <end position="325"/>
    </location>
</feature>
<feature type="transmembrane region" description="Helical" evidence="2">
    <location>
        <begin position="330"/>
        <end position="350"/>
    </location>
</feature>
<feature type="transmembrane region" description="Helical" evidence="2">
    <location>
        <begin position="386"/>
        <end position="406"/>
    </location>
</feature>
<feature type="transmembrane region" description="Helical" evidence="2">
    <location>
        <begin position="416"/>
        <end position="436"/>
    </location>
</feature>
<feature type="transmembrane region" description="Helical" evidence="2">
    <location>
        <begin position="462"/>
        <end position="482"/>
    </location>
</feature>
<sequence length="500" mass="55887">MNDFPWLTIIVVFPISAGSLMLFLPHRGNKINKWYTICICILELLITTYAFCYNFKMDDPLIQMSEDYKWINFFDFDWRLGIDGLSIGTILLTGFITTLATLAAFPVTRDSRLFHFLMLAMYSGQIGSFSSRDLLLFFIMWELELIPVYLLLSMWGGKKRLYSATKFILYTAGSSIFLLIGVLGISLYGSNEPTLNLELLANQSYPVTLEILFYIGFVIALTVKSPIIPLHTWLPDTHGEAHYSTCMLLAGILLKMGAYGLVRINMELLPHAHSLFSPWLMAVGTIQIIYAASTSPGQRNLKKRIAYSSVSHMGFIIIGIGSITDPGLNGAILQIISHGFIGAALFFLAGTSYDRMRLVYLDEMGGMAISIPKIFTMFTILSMASLALPGMSGFVAELIVFFGIITSQKYFVISKILIIFVMAIGIILTPIYLLSMSRQMFYGYKLSNVKNLSFFDSGPRELFLSISILLPIIGIGIYPDFVLSLASDKVESILSNYFYG</sequence>
<name>NU4C_DRANE</name>
<reference key="1">
    <citation type="submission" date="2007-03" db="EMBL/GenBank/DDBJ databases">
        <title>Sequencing analysis of Draba nemoroza chloroplast DNA.</title>
        <authorList>
            <person name="Hosouchi T."/>
            <person name="Tsuruoka H."/>
            <person name="Kotani H."/>
        </authorList>
    </citation>
    <scope>NUCLEOTIDE SEQUENCE [LARGE SCALE GENOMIC DNA]</scope>
</reference>
<gene>
    <name evidence="2" type="primary">ndhD</name>
</gene>
<geneLocation type="chloroplast"/>
<protein>
    <recommendedName>
        <fullName evidence="2">NAD(P)H-quinone oxidoreductase chain 4, chloroplastic</fullName>
        <ecNumber evidence="2">7.1.1.-</ecNumber>
    </recommendedName>
    <alternativeName>
        <fullName evidence="2">NAD(P)H dehydrogenase, chain 4</fullName>
    </alternativeName>
    <alternativeName>
        <fullName evidence="2">NADH-plastoquinone oxidoreductase chain 4</fullName>
    </alternativeName>
</protein>
<proteinExistence type="inferred from homology"/>
<evidence type="ECO:0000250" key="1"/>
<evidence type="ECO:0000255" key="2">
    <source>
        <dbReference type="HAMAP-Rule" id="MF_00491"/>
    </source>
</evidence>
<dbReference type="EC" id="7.1.1.-" evidence="2"/>
<dbReference type="EMBL" id="AP009373">
    <property type="protein sequence ID" value="BAF50426.1"/>
    <property type="status" value="ALT_SEQ"/>
    <property type="molecule type" value="Genomic_DNA"/>
</dbReference>
<dbReference type="RefSeq" id="YP_001123601.2">
    <property type="nucleotide sequence ID" value="NC_009272.1"/>
</dbReference>
<dbReference type="SMR" id="A4QL71"/>
<dbReference type="GeneID" id="4964795"/>
<dbReference type="GO" id="GO:0009535">
    <property type="term" value="C:chloroplast thylakoid membrane"/>
    <property type="evidence" value="ECO:0007669"/>
    <property type="project" value="UniProtKB-SubCell"/>
</dbReference>
<dbReference type="GO" id="GO:0008137">
    <property type="term" value="F:NADH dehydrogenase (ubiquinone) activity"/>
    <property type="evidence" value="ECO:0007669"/>
    <property type="project" value="InterPro"/>
</dbReference>
<dbReference type="GO" id="GO:0048039">
    <property type="term" value="F:ubiquinone binding"/>
    <property type="evidence" value="ECO:0007669"/>
    <property type="project" value="TreeGrafter"/>
</dbReference>
<dbReference type="GO" id="GO:0042773">
    <property type="term" value="P:ATP synthesis coupled electron transport"/>
    <property type="evidence" value="ECO:0007669"/>
    <property type="project" value="InterPro"/>
</dbReference>
<dbReference type="GO" id="GO:0015990">
    <property type="term" value="P:electron transport coupled proton transport"/>
    <property type="evidence" value="ECO:0007669"/>
    <property type="project" value="TreeGrafter"/>
</dbReference>
<dbReference type="HAMAP" id="MF_00491">
    <property type="entry name" value="NDH1_NuoM"/>
    <property type="match status" value="1"/>
</dbReference>
<dbReference type="InterPro" id="IPR022997">
    <property type="entry name" value="NADH_Q_OxRdtase_chain4"/>
</dbReference>
<dbReference type="InterPro" id="IPR010227">
    <property type="entry name" value="NADH_Q_OxRdtase_chainM/4"/>
</dbReference>
<dbReference type="InterPro" id="IPR003918">
    <property type="entry name" value="NADH_UbQ_OxRdtase"/>
</dbReference>
<dbReference type="InterPro" id="IPR001750">
    <property type="entry name" value="ND/Mrp_TM"/>
</dbReference>
<dbReference type="NCBIfam" id="TIGR01972">
    <property type="entry name" value="NDH_I_M"/>
    <property type="match status" value="1"/>
</dbReference>
<dbReference type="PANTHER" id="PTHR43507:SF21">
    <property type="entry name" value="NAD(P)H-QUINONE OXIDOREDUCTASE CHAIN 4, CHLOROPLASTIC"/>
    <property type="match status" value="1"/>
</dbReference>
<dbReference type="PANTHER" id="PTHR43507">
    <property type="entry name" value="NADH-UBIQUINONE OXIDOREDUCTASE CHAIN 4"/>
    <property type="match status" value="1"/>
</dbReference>
<dbReference type="Pfam" id="PF00361">
    <property type="entry name" value="Proton_antipo_M"/>
    <property type="match status" value="1"/>
</dbReference>
<dbReference type="PRINTS" id="PR01437">
    <property type="entry name" value="NUOXDRDTASE4"/>
</dbReference>
<organism>
    <name type="scientific">Draba nemorosa</name>
    <name type="common">Woodland whitlowgrass</name>
    <dbReference type="NCBI Taxonomy" id="171822"/>
    <lineage>
        <taxon>Eukaryota</taxon>
        <taxon>Viridiplantae</taxon>
        <taxon>Streptophyta</taxon>
        <taxon>Embryophyta</taxon>
        <taxon>Tracheophyta</taxon>
        <taxon>Spermatophyta</taxon>
        <taxon>Magnoliopsida</taxon>
        <taxon>eudicotyledons</taxon>
        <taxon>Gunneridae</taxon>
        <taxon>Pentapetalae</taxon>
        <taxon>rosids</taxon>
        <taxon>malvids</taxon>
        <taxon>Brassicales</taxon>
        <taxon>Brassicaceae</taxon>
        <taxon>Arabideae</taxon>
        <taxon>Draba</taxon>
    </lineage>
</organism>